<sequence length="630" mass="68647">MTDTNHSSMRQHSLQSLAIAAIGVVFGDIGTSPLYSLKEAFSPAHGIPLTPSAILGVISLLFWAIILVVGIKYVLFVMRADNNGEGGVLALMALSLRPLNPKSRITGLMMALGIFGACMFYGDAVITPAISVMSAVEGLEVATPQLSHLVLPITIVILIALFWIQRHGTATVGKLFGPIMLLWFVTIAALGIYHIARAPMIVSAINPYYAFSFMSEHVLLAYVVLGSVVLVLTGAEALYADMGHFGAKPIRLAAYVLVMPSLVLNYFGQGALLLLDPKAIENPFFLLAPQWAALPLVVLSTVATVIASQAVISGAYSLTSQAIQLGYVPRMKILHTSELAIGQIYVPVVNWLLLFVILCIVIGFKSSDNLAAAYGIAVTATMVITTILAAVVMVKVWNWNKLLVAMIIGVFLVIDLGFFGANLLKVEQGGWLPLGIGALLFFLLMTWYKGRHIVKERTAADGIPLAPFLQGLLAHPPHRVSGTAIYLTGNDTLVPVSLLHNLKHNKVLHERTIFMTFVTRDIPYVKDHERVTVHDAGEGLYIVKAEYGFNETPDVKAVLEEVARQRGMTFELMDTSFFLARETVVPTHLPGMSIWRERVFAWMHQNAAKPTDFFAIPANRVVELGTKIEI</sequence>
<reference key="1">
    <citation type="journal article" date="2004" name="Proc. Natl. Acad. Sci. U.S.A.">
        <title>Structural flexibility in the Burkholderia mallei genome.</title>
        <authorList>
            <person name="Nierman W.C."/>
            <person name="DeShazer D."/>
            <person name="Kim H.S."/>
            <person name="Tettelin H."/>
            <person name="Nelson K.E."/>
            <person name="Feldblyum T.V."/>
            <person name="Ulrich R.L."/>
            <person name="Ronning C.M."/>
            <person name="Brinkac L.M."/>
            <person name="Daugherty S.C."/>
            <person name="Davidsen T.D."/>
            <person name="DeBoy R.T."/>
            <person name="Dimitrov G."/>
            <person name="Dodson R.J."/>
            <person name="Durkin A.S."/>
            <person name="Gwinn M.L."/>
            <person name="Haft D.H."/>
            <person name="Khouri H.M."/>
            <person name="Kolonay J.F."/>
            <person name="Madupu R."/>
            <person name="Mohammoud Y."/>
            <person name="Nelson W.C."/>
            <person name="Radune D."/>
            <person name="Romero C.M."/>
            <person name="Sarria S."/>
            <person name="Selengut J."/>
            <person name="Shamblin C."/>
            <person name="Sullivan S.A."/>
            <person name="White O."/>
            <person name="Yu Y."/>
            <person name="Zafar N."/>
            <person name="Zhou L."/>
            <person name="Fraser C.M."/>
        </authorList>
    </citation>
    <scope>NUCLEOTIDE SEQUENCE [LARGE SCALE GENOMIC DNA]</scope>
    <source>
        <strain>ATCC 23344</strain>
    </source>
</reference>
<protein>
    <recommendedName>
        <fullName evidence="1">Probable potassium transport system protein Kup</fullName>
    </recommendedName>
</protein>
<comment type="function">
    <text evidence="1">Transport of potassium into the cell. Likely operates as a K(+):H(+) symporter.</text>
</comment>
<comment type="catalytic activity">
    <reaction evidence="1">
        <text>K(+)(in) + H(+)(in) = K(+)(out) + H(+)(out)</text>
        <dbReference type="Rhea" id="RHEA:28490"/>
        <dbReference type="ChEBI" id="CHEBI:15378"/>
        <dbReference type="ChEBI" id="CHEBI:29103"/>
    </reaction>
    <physiologicalReaction direction="right-to-left" evidence="1">
        <dbReference type="Rhea" id="RHEA:28492"/>
    </physiologicalReaction>
</comment>
<comment type="subcellular location">
    <subcellularLocation>
        <location evidence="1">Cell inner membrane</location>
        <topology evidence="1">Multi-pass membrane protein</topology>
    </subcellularLocation>
</comment>
<comment type="similarity">
    <text evidence="1">Belongs to the HAK/KUP transporter (TC 2.A.72) family.</text>
</comment>
<name>KUP_BURMA</name>
<keyword id="KW-0997">Cell inner membrane</keyword>
<keyword id="KW-1003">Cell membrane</keyword>
<keyword id="KW-0406">Ion transport</keyword>
<keyword id="KW-0472">Membrane</keyword>
<keyword id="KW-0630">Potassium</keyword>
<keyword id="KW-0633">Potassium transport</keyword>
<keyword id="KW-1185">Reference proteome</keyword>
<keyword id="KW-0769">Symport</keyword>
<keyword id="KW-0812">Transmembrane</keyword>
<keyword id="KW-1133">Transmembrane helix</keyword>
<keyword id="KW-0813">Transport</keyword>
<accession>Q62JX8</accession>
<organism>
    <name type="scientific">Burkholderia mallei (strain ATCC 23344)</name>
    <dbReference type="NCBI Taxonomy" id="243160"/>
    <lineage>
        <taxon>Bacteria</taxon>
        <taxon>Pseudomonadati</taxon>
        <taxon>Pseudomonadota</taxon>
        <taxon>Betaproteobacteria</taxon>
        <taxon>Burkholderiales</taxon>
        <taxon>Burkholderiaceae</taxon>
        <taxon>Burkholderia</taxon>
        <taxon>pseudomallei group</taxon>
    </lineage>
</organism>
<gene>
    <name evidence="1" type="primary">kup</name>
    <name type="ordered locus">BMA1331</name>
</gene>
<feature type="chain" id="PRO_0000209004" description="Probable potassium transport system protein Kup">
    <location>
        <begin position="1"/>
        <end position="630"/>
    </location>
</feature>
<feature type="transmembrane region" description="Helical" evidence="1">
    <location>
        <begin position="17"/>
        <end position="37"/>
    </location>
</feature>
<feature type="transmembrane region" description="Helical" evidence="1">
    <location>
        <begin position="51"/>
        <end position="71"/>
    </location>
</feature>
<feature type="transmembrane region" description="Helical" evidence="1">
    <location>
        <begin position="105"/>
        <end position="125"/>
    </location>
</feature>
<feature type="transmembrane region" description="Helical" evidence="1">
    <location>
        <begin position="144"/>
        <end position="164"/>
    </location>
</feature>
<feature type="transmembrane region" description="Helical" evidence="1">
    <location>
        <begin position="175"/>
        <end position="195"/>
    </location>
</feature>
<feature type="transmembrane region" description="Helical" evidence="1">
    <location>
        <begin position="218"/>
        <end position="238"/>
    </location>
</feature>
<feature type="transmembrane region" description="Helical" evidence="1">
    <location>
        <begin position="255"/>
        <end position="275"/>
    </location>
</feature>
<feature type="transmembrane region" description="Helical" evidence="1">
    <location>
        <begin position="283"/>
        <end position="303"/>
    </location>
</feature>
<feature type="transmembrane region" description="Helical" evidence="1">
    <location>
        <begin position="344"/>
        <end position="364"/>
    </location>
</feature>
<feature type="transmembrane region" description="Helical" evidence="1">
    <location>
        <begin position="374"/>
        <end position="394"/>
    </location>
</feature>
<feature type="transmembrane region" description="Helical" evidence="1">
    <location>
        <begin position="402"/>
        <end position="422"/>
    </location>
</feature>
<feature type="transmembrane region" description="Helical" evidence="1">
    <location>
        <begin position="428"/>
        <end position="448"/>
    </location>
</feature>
<evidence type="ECO:0000255" key="1">
    <source>
        <dbReference type="HAMAP-Rule" id="MF_01522"/>
    </source>
</evidence>
<proteinExistence type="inferred from homology"/>
<dbReference type="EMBL" id="CP000010">
    <property type="protein sequence ID" value="AAU47539.1"/>
    <property type="molecule type" value="Genomic_DNA"/>
</dbReference>
<dbReference type="RefSeq" id="WP_004191791.1">
    <property type="nucleotide sequence ID" value="NC_006348.1"/>
</dbReference>
<dbReference type="RefSeq" id="YP_102991.1">
    <property type="nucleotide sequence ID" value="NC_006348.1"/>
</dbReference>
<dbReference type="KEGG" id="bma:BMA1331"/>
<dbReference type="PATRIC" id="fig|243160.12.peg.1369"/>
<dbReference type="eggNOG" id="COG3158">
    <property type="taxonomic scope" value="Bacteria"/>
</dbReference>
<dbReference type="HOGENOM" id="CLU_008142_4_2_4"/>
<dbReference type="Proteomes" id="UP000006693">
    <property type="component" value="Chromosome 1"/>
</dbReference>
<dbReference type="GO" id="GO:0005886">
    <property type="term" value="C:plasma membrane"/>
    <property type="evidence" value="ECO:0007669"/>
    <property type="project" value="UniProtKB-SubCell"/>
</dbReference>
<dbReference type="GO" id="GO:0015079">
    <property type="term" value="F:potassium ion transmembrane transporter activity"/>
    <property type="evidence" value="ECO:0007669"/>
    <property type="project" value="UniProtKB-UniRule"/>
</dbReference>
<dbReference type="GO" id="GO:0015293">
    <property type="term" value="F:symporter activity"/>
    <property type="evidence" value="ECO:0007669"/>
    <property type="project" value="UniProtKB-UniRule"/>
</dbReference>
<dbReference type="HAMAP" id="MF_01522">
    <property type="entry name" value="Kup"/>
    <property type="match status" value="1"/>
</dbReference>
<dbReference type="InterPro" id="IPR003855">
    <property type="entry name" value="K+_transporter"/>
</dbReference>
<dbReference type="InterPro" id="IPR053952">
    <property type="entry name" value="K_trans_C"/>
</dbReference>
<dbReference type="InterPro" id="IPR053951">
    <property type="entry name" value="K_trans_N"/>
</dbReference>
<dbReference type="InterPro" id="IPR023051">
    <property type="entry name" value="Kup"/>
</dbReference>
<dbReference type="PANTHER" id="PTHR30540:SF79">
    <property type="entry name" value="LOW AFFINITY POTASSIUM TRANSPORT SYSTEM PROTEIN KUP"/>
    <property type="match status" value="1"/>
</dbReference>
<dbReference type="PANTHER" id="PTHR30540">
    <property type="entry name" value="OSMOTIC STRESS POTASSIUM TRANSPORTER"/>
    <property type="match status" value="1"/>
</dbReference>
<dbReference type="Pfam" id="PF02705">
    <property type="entry name" value="K_trans"/>
    <property type="match status" value="1"/>
</dbReference>
<dbReference type="Pfam" id="PF22776">
    <property type="entry name" value="K_trans_C"/>
    <property type="match status" value="1"/>
</dbReference>